<feature type="signal peptide">
    <location>
        <begin position="1"/>
        <end position="24"/>
    </location>
</feature>
<feature type="chain" id="PRO_0000013361" description="Thermostable direct hemolysin 1" evidence="1">
    <location>
        <begin position="25"/>
        <end position="189"/>
    </location>
</feature>
<feature type="disulfide bond" evidence="1">
    <location>
        <begin position="175"/>
        <end position="185"/>
    </location>
</feature>
<feature type="sequence conflict" description="In Ref. 2; AA sequence." evidence="2" ref="2">
    <original>Q</original>
    <variation>N</variation>
    <location>
        <position position="52"/>
    </location>
</feature>
<feature type="sequence conflict" description="In Ref. 2; AA sequence." evidence="2" ref="2">
    <original>K</original>
    <variation>E</variation>
    <location>
        <position position="58"/>
    </location>
</feature>
<feature type="sequence conflict" description="In Ref. 2; AA sequence." evidence="2" ref="2">
    <original>E</original>
    <variation>K</variation>
    <location>
        <position position="74"/>
    </location>
</feature>
<feature type="sequence conflict" description="In Ref. 2; AA sequence." evidence="2" ref="2">
    <original>S</original>
    <variation>H</variation>
    <location>
        <position position="113"/>
    </location>
</feature>
<feature type="sequence conflict" description="In Ref. 2; AA sequence and 3; BAA14132." evidence="2" ref="2 3">
    <original>G</original>
    <variation>D</variation>
    <location>
        <position position="123"/>
    </location>
</feature>
<feature type="sequence conflict" description="In Ref. 2; AA sequence." evidence="2" ref="2">
    <original>N</original>
    <variation>D</variation>
    <location>
        <position position="132"/>
    </location>
</feature>
<feature type="sequence conflict" description="In Ref. 2; AA sequence." evidence="2" ref="2">
    <original>N</original>
    <variation>S</variation>
    <location>
        <position position="136"/>
    </location>
</feature>
<feature type="sequence conflict" description="In Ref. 2; AA sequence." evidence="2" ref="2">
    <original>EG</original>
    <variation>QD</variation>
    <location>
        <begin position="142"/>
        <end position="143"/>
    </location>
</feature>
<evidence type="ECO:0000269" key="1">
    <source>
    </source>
</evidence>
<evidence type="ECO:0000305" key="2"/>
<dbReference type="EMBL" id="M10069">
    <property type="protein sequence ID" value="AAA27569.1"/>
    <property type="molecule type" value="Genomic_DNA"/>
</dbReference>
<dbReference type="EMBL" id="D90101">
    <property type="protein sequence ID" value="BAA14132.1"/>
    <property type="molecule type" value="Genomic_DNA"/>
</dbReference>
<dbReference type="EMBL" id="X54340">
    <property type="protein sequence ID" value="CAA38228.1"/>
    <property type="molecule type" value="Genomic_DNA"/>
</dbReference>
<dbReference type="EMBL" id="BA000032">
    <property type="protein sequence ID" value="BAC62721.1"/>
    <property type="molecule type" value="Genomic_DNA"/>
</dbReference>
<dbReference type="PIR" id="A25100">
    <property type="entry name" value="LEVCTP"/>
</dbReference>
<dbReference type="RefSeq" id="NP_800888.1">
    <property type="nucleotide sequence ID" value="NC_004605.1"/>
</dbReference>
<dbReference type="RefSeq" id="WP_005478284.1">
    <property type="nucleotide sequence ID" value="NC_004605.1"/>
</dbReference>
<dbReference type="SMR" id="P19249"/>
<dbReference type="GeneID" id="1192074"/>
<dbReference type="KEGG" id="vpa:VPA1378"/>
<dbReference type="PATRIC" id="fig|223926.6.peg.4303"/>
<dbReference type="HOGENOM" id="CLU_1495597_0_0_6"/>
<dbReference type="Proteomes" id="UP000002493">
    <property type="component" value="Chromosome 2"/>
</dbReference>
<dbReference type="GO" id="GO:0005576">
    <property type="term" value="C:extracellular region"/>
    <property type="evidence" value="ECO:0007669"/>
    <property type="project" value="InterPro"/>
</dbReference>
<dbReference type="GO" id="GO:0090729">
    <property type="term" value="F:toxin activity"/>
    <property type="evidence" value="ECO:0007669"/>
    <property type="project" value="UniProtKB-KW"/>
</dbReference>
<dbReference type="GO" id="GO:0019836">
    <property type="term" value="P:symbiont-mediated hemolysis of host erythrocyte"/>
    <property type="evidence" value="ECO:0007669"/>
    <property type="project" value="InterPro"/>
</dbReference>
<dbReference type="Gene3D" id="2.60.270.30">
    <property type="entry name" value="Vibrio parahaemolyticus thermostable direct hemolysin"/>
    <property type="match status" value="1"/>
</dbReference>
<dbReference type="InterPro" id="IPR038689">
    <property type="entry name" value="TDH_sf"/>
</dbReference>
<dbReference type="InterPro" id="IPR005015">
    <property type="entry name" value="Thermostable_hemolysn_vibrio"/>
</dbReference>
<dbReference type="Pfam" id="PF03347">
    <property type="entry name" value="TDH"/>
    <property type="match status" value="1"/>
</dbReference>
<sequence>MKHQYFAKKSFLFISMLAAFKTSAFELPSVPFPAPGSDEILFVVRDTTFNTQAPVNVKVSDFWTNRNVKRKPYEDVYGQSVFTTSGTKWLTSYMTVNINDKDYTMAAVSGYKSGHSAVFVKSGQVQLQHSYNSVANFVGEDEGSIPSKMYLDETPEYFVNVEAYESGSGNILVMCISNKESFFECKHQQ</sequence>
<reference key="1">
    <citation type="journal article" date="1985" name="J. Bacteriol.">
        <title>Nucleotide sequence of the thermostable direct hemolysin gene of Vibrio parahaemolyticus.</title>
        <authorList>
            <person name="Nishibuchi M."/>
            <person name="Kaper J.B."/>
        </authorList>
    </citation>
    <scope>NUCLEOTIDE SEQUENCE [GENOMIC DNA]</scope>
    <source>
        <strain>T4750</strain>
    </source>
</reference>
<reference key="2">
    <citation type="journal article" date="1987" name="J. Biochem.">
        <title>Amino acid sequence of thermostable direct hemolysin produced by Vibrio parahaemolyticus.</title>
        <authorList>
            <person name="Tsunasawa S."/>
            <person name="Sugihara A."/>
            <person name="Masaki T."/>
            <person name="Sakiyama F."/>
            <person name="Takeda Y."/>
            <person name="Miwatani T."/>
            <person name="Narita K."/>
        </authorList>
    </citation>
    <scope>PROTEIN SEQUENCE</scope>
    <scope>DISULFIDE BOND</scope>
</reference>
<reference key="3">
    <citation type="journal article" date="1990" name="Gene">
        <title>Cloning and expression of two genes encoding highly homologous hemolysins from a Kanagawa phenomenon-positive Vibrio parahaemolyticus T4750 strain.</title>
        <authorList>
            <person name="Iida T."/>
            <person name="Yamamoto K."/>
        </authorList>
    </citation>
    <scope>NUCLEOTIDE SEQUENCE [GENOMIC DNA]</scope>
    <source>
        <strain>T4750</strain>
    </source>
</reference>
<reference key="4">
    <citation type="journal article" date="1990" name="Mol. Microbiol.">
        <title>Duplication and variation of the thermostable direct haemolysin (tdh) gene in Vibrio parahaemolyticus.</title>
        <authorList>
            <person name="Nishibuchi M."/>
            <person name="Kaper J.B."/>
        </authorList>
    </citation>
    <scope>NUCLEOTIDE SEQUENCE [GENOMIC DNA]</scope>
</reference>
<reference key="5">
    <citation type="journal article" date="2003" name="Lancet">
        <title>Genome sequence of Vibrio parahaemolyticus: a pathogenic mechanism distinct from that of V. cholerae.</title>
        <authorList>
            <person name="Makino K."/>
            <person name="Oshima K."/>
            <person name="Kurokawa K."/>
            <person name="Yokoyama K."/>
            <person name="Uda T."/>
            <person name="Tagomori K."/>
            <person name="Iijima Y."/>
            <person name="Najima M."/>
            <person name="Nakano M."/>
            <person name="Yamashita A."/>
            <person name="Kubota Y."/>
            <person name="Kimura S."/>
            <person name="Yasunaga T."/>
            <person name="Honda T."/>
            <person name="Shinagawa H."/>
            <person name="Hattori M."/>
            <person name="Iida T."/>
        </authorList>
    </citation>
    <scope>NUCLEOTIDE SEQUENCE [LARGE SCALE GENOMIC DNA]</scope>
    <source>
        <strain>RIMD 2210633</strain>
    </source>
</reference>
<organism>
    <name type="scientific">Vibrio parahaemolyticus serotype O3:K6 (strain RIMD 2210633)</name>
    <dbReference type="NCBI Taxonomy" id="223926"/>
    <lineage>
        <taxon>Bacteria</taxon>
        <taxon>Pseudomonadati</taxon>
        <taxon>Pseudomonadota</taxon>
        <taxon>Gammaproteobacteria</taxon>
        <taxon>Vibrionales</taxon>
        <taxon>Vibrionaceae</taxon>
        <taxon>Vibrio</taxon>
    </lineage>
</organism>
<comment type="function">
    <text>Bacterial hemolysins are exotoxins that attack blood cell membranes and cause cell rupture by mechanisms not clearly defined.</text>
</comment>
<comment type="subunit">
    <text>Homodimer.</text>
</comment>
<comment type="similarity">
    <text evidence="2">Belongs to the TDH hemolysin family.</text>
</comment>
<gene>
    <name type="primary">tdh1</name>
    <name type="synonym">tdh</name>
    <name type="ordered locus">VPA1378</name>
</gene>
<name>HLY1_VIBPA</name>
<proteinExistence type="evidence at protein level"/>
<keyword id="KW-0204">Cytolysis</keyword>
<keyword id="KW-0903">Direct protein sequencing</keyword>
<keyword id="KW-1015">Disulfide bond</keyword>
<keyword id="KW-0354">Hemolysis</keyword>
<keyword id="KW-0732">Signal</keyword>
<keyword id="KW-0800">Toxin</keyword>
<keyword id="KW-0843">Virulence</keyword>
<protein>
    <recommendedName>
        <fullName>Thermostable direct hemolysin 1</fullName>
    </recommendedName>
    <alternativeName>
        <fullName>Kanagawa phenomenon-associated hemolysin</fullName>
    </alternativeName>
</protein>
<accession>P19249</accession>
<accession>P07624</accession>